<organism>
    <name type="scientific">Acanthamoeba polyphaga mimivirus</name>
    <name type="common">APMV</name>
    <dbReference type="NCBI Taxonomy" id="212035"/>
    <lineage>
        <taxon>Viruses</taxon>
        <taxon>Varidnaviria</taxon>
        <taxon>Bamfordvirae</taxon>
        <taxon>Nucleocytoviricota</taxon>
        <taxon>Megaviricetes</taxon>
        <taxon>Imitervirales</taxon>
        <taxon>Mimiviridae</taxon>
        <taxon>Megamimivirinae</taxon>
        <taxon>Mimivirus</taxon>
        <taxon>Mimivirus bradfordmassiliense</taxon>
    </lineage>
</organism>
<gene>
    <name type="ordered locus">MIMI_L761</name>
</gene>
<dbReference type="EMBL" id="AY653733">
    <property type="protein sequence ID" value="AAV51021.1"/>
    <property type="molecule type" value="Genomic_DNA"/>
</dbReference>
<dbReference type="KEGG" id="vg:9925419"/>
<dbReference type="Proteomes" id="UP000001134">
    <property type="component" value="Genome"/>
</dbReference>
<sequence length="159" mass="18988">MNHLNNIINRIFSQDKNKAEKISRYLTTMIDQDYITDDDENILYQFSQEFNNMSDNLFEFIGNVVNQNIVFNVPQLSIYLSEDKIDVPCSRLNTYLKCYWHKITYKSGLLREKVWVPIKDFSGNIIIERANVISYQKEDLPYLLIYISRYLKTIDYRTS</sequence>
<protein>
    <recommendedName>
        <fullName>Uncharacterized protein L761</fullName>
    </recommendedName>
</protein>
<reference key="1">
    <citation type="journal article" date="2004" name="Science">
        <title>The 1.2-megabase genome sequence of Mimivirus.</title>
        <authorList>
            <person name="Raoult D."/>
            <person name="Audic S."/>
            <person name="Robert C."/>
            <person name="Abergel C."/>
            <person name="Renesto P."/>
            <person name="Ogata H."/>
            <person name="La Scola B."/>
            <person name="Susan M."/>
            <person name="Claverie J.-M."/>
        </authorList>
    </citation>
    <scope>NUCLEOTIDE SEQUENCE [LARGE SCALE GENOMIC DNA]</scope>
    <source>
        <strain>Rowbotham-Bradford</strain>
    </source>
</reference>
<evidence type="ECO:0000305" key="1"/>
<comment type="similarity">
    <text evidence="1">Belongs to the mimivirus L761/L899 family.</text>
</comment>
<feature type="chain" id="PRO_0000071349" description="Uncharacterized protein L761">
    <location>
        <begin position="1"/>
        <end position="159"/>
    </location>
</feature>
<proteinExistence type="inferred from homology"/>
<accession>Q5UPP6</accession>
<organismHost>
    <name type="scientific">Acanthamoeba polyphaga</name>
    <name type="common">Amoeba</name>
    <dbReference type="NCBI Taxonomy" id="5757"/>
</organismHost>
<keyword id="KW-1185">Reference proteome</keyword>
<name>YL761_MIMIV</name>